<name>VEMP_CVHN5</name>
<feature type="chain" id="PRO_0000297814" description="Envelope small membrane protein">
    <location>
        <begin position="1"/>
        <end position="82"/>
    </location>
</feature>
<feature type="topological domain" description="Virion surface" evidence="1">
    <location>
        <begin position="1"/>
        <end position="16"/>
    </location>
</feature>
<feature type="transmembrane region" description="Helical" evidence="1">
    <location>
        <begin position="17"/>
        <end position="37"/>
    </location>
</feature>
<feature type="topological domain" description="Intravirion" evidence="1">
    <location>
        <begin position="38"/>
        <end position="78"/>
    </location>
</feature>
<dbReference type="EMBL" id="DQ339101">
    <property type="protein sequence ID" value="ABC70721.1"/>
    <property type="molecule type" value="Genomic_RNA"/>
</dbReference>
<dbReference type="Proteomes" id="UP000001985">
    <property type="component" value="Genome"/>
</dbReference>
<dbReference type="GO" id="GO:0044178">
    <property type="term" value="C:host cell Golgi membrane"/>
    <property type="evidence" value="ECO:0007669"/>
    <property type="project" value="UniProtKB-SubCell"/>
</dbReference>
<dbReference type="GO" id="GO:0016020">
    <property type="term" value="C:membrane"/>
    <property type="evidence" value="ECO:0007669"/>
    <property type="project" value="UniProtKB-UniRule"/>
</dbReference>
<dbReference type="GO" id="GO:0140975">
    <property type="term" value="P:disruption of cellular anatomical structure in another organism"/>
    <property type="evidence" value="ECO:0007669"/>
    <property type="project" value="UniProtKB-UniRule"/>
</dbReference>
<dbReference type="GO" id="GO:0046760">
    <property type="term" value="P:viral budding from Golgi membrane"/>
    <property type="evidence" value="ECO:0007669"/>
    <property type="project" value="UniProtKB-UniRule"/>
</dbReference>
<dbReference type="CDD" id="cd21532">
    <property type="entry name" value="HKU1-CoV-like_E"/>
    <property type="match status" value="1"/>
</dbReference>
<dbReference type="Gene3D" id="6.10.250.1810">
    <property type="match status" value="1"/>
</dbReference>
<dbReference type="HAMAP" id="MF_04204">
    <property type="entry name" value="BETA_CORONA_E"/>
    <property type="match status" value="1"/>
</dbReference>
<dbReference type="InterPro" id="IPR043506">
    <property type="entry name" value="E_protein_bCoV"/>
</dbReference>
<dbReference type="InterPro" id="IPR003873">
    <property type="entry name" value="E_protein_CoV"/>
</dbReference>
<dbReference type="Pfam" id="PF02723">
    <property type="entry name" value="CoV_E"/>
    <property type="match status" value="1"/>
</dbReference>
<dbReference type="PROSITE" id="PS51926">
    <property type="entry name" value="COV_E"/>
    <property type="match status" value="1"/>
</dbReference>
<organismHost>
    <name type="scientific">Homo sapiens</name>
    <name type="common">Human</name>
    <dbReference type="NCBI Taxonomy" id="9606"/>
</organismHost>
<evidence type="ECO:0000255" key="1">
    <source>
        <dbReference type="HAMAP-Rule" id="MF_04204"/>
    </source>
</evidence>
<organism>
    <name type="scientific">Human coronavirus HKU1 (isolate N5)</name>
    <name type="common">HCoV-HKU1</name>
    <dbReference type="NCBI Taxonomy" id="443241"/>
    <lineage>
        <taxon>Viruses</taxon>
        <taxon>Riboviria</taxon>
        <taxon>Orthornavirae</taxon>
        <taxon>Pisuviricota</taxon>
        <taxon>Pisoniviricetes</taxon>
        <taxon>Nidovirales</taxon>
        <taxon>Cornidovirineae</taxon>
        <taxon>Coronaviridae</taxon>
        <taxon>Orthocoronavirinae</taxon>
        <taxon>Betacoronavirus</taxon>
        <taxon>Embecovirus</taxon>
        <taxon>Human coronavirus HKU1</taxon>
    </lineage>
</organism>
<comment type="function">
    <text evidence="1">Plays a central role in virus morphogenesis and assembly. Acts as a viroporin and self-assembles in host membranes forming pentameric protein-lipid pores that allow ion transport. Also plays a role in the induction of apoptosis.</text>
</comment>
<comment type="subunit">
    <text evidence="1">Homopentamer. Interacts with membrane protein M in the budding compartment of the host cell, which is located between endoplasmic reticulum and the Golgi complex. Interacts with Nucleoprotein.</text>
</comment>
<comment type="subcellular location">
    <subcellularLocation>
        <location evidence="1">Host Golgi apparatus membrane</location>
        <topology evidence="1">Single-pass type III membrane protein</topology>
    </subcellularLocation>
    <text evidence="1">The cytoplasmic tail functions as a Golgi complex-targeting signal.</text>
</comment>
<comment type="miscellaneous">
    <text>Isolate N5 belongs to genotype C. Genotype C probably arose from recombination between genotypes A and B.</text>
</comment>
<comment type="similarity">
    <text evidence="1">Belongs to the betacoronaviruses E protein family.</text>
</comment>
<gene>
    <name evidence="1" type="primary">E</name>
    <name type="synonym">sM</name>
    <name type="ORF">5</name>
</gene>
<reference key="1">
    <citation type="journal article" date="2006" name="J. Virol.">
        <title>Comparative analysis of 22 coronavirus HKU1 genomes reveals a novel genotype and evidence of natural recombination in coronavirus HKU1.</title>
        <authorList>
            <person name="Woo P.C.Y."/>
            <person name="Lau S.K.P."/>
            <person name="Yip C.C.Y."/>
            <person name="Huang Y."/>
            <person name="Tsoi H.-W."/>
            <person name="Chan K.-H."/>
            <person name="Yuen K.-Y."/>
        </authorList>
    </citation>
    <scope>NUCLEOTIDE SEQUENCE [GENOMIC RNA]</scope>
</reference>
<protein>
    <recommendedName>
        <fullName evidence="1">Envelope small membrane protein</fullName>
        <shortName evidence="1">E protein</shortName>
        <shortName evidence="1">sM protein</shortName>
    </recommendedName>
</protein>
<keyword id="KW-0053">Apoptosis</keyword>
<keyword id="KW-1040">Host Golgi apparatus</keyword>
<keyword id="KW-1043">Host membrane</keyword>
<keyword id="KW-0472">Membrane</keyword>
<keyword id="KW-1185">Reference proteome</keyword>
<keyword id="KW-0812">Transmembrane</keyword>
<keyword id="KW-1133">Transmembrane helix</keyword>
<sequence length="82" mass="9381">MVDVFFTDTAWYVGQIFFLVLSCVIFLIFVVALLATIKLCIQICGFCNIFIISPSAYVYNRGRQLYKSYSEHVIPSTLDDLI</sequence>
<accession>Q0ZME5</accession>
<proteinExistence type="inferred from homology"/>